<comment type="function">
    <text evidence="2">Catalyzes the phosphorylation of hydroxymethylpyrimidine phosphate (HMP-P) to HMP-PP, and of HMP to HMP-P.</text>
</comment>
<comment type="catalytic activity">
    <reaction evidence="2">
        <text>4-amino-5-hydroxymethyl-2-methylpyrimidine + ATP = 4-amino-2-methyl-5-(phosphooxymethyl)pyrimidine + ADP + H(+)</text>
        <dbReference type="Rhea" id="RHEA:23096"/>
        <dbReference type="ChEBI" id="CHEBI:15378"/>
        <dbReference type="ChEBI" id="CHEBI:16892"/>
        <dbReference type="ChEBI" id="CHEBI:30616"/>
        <dbReference type="ChEBI" id="CHEBI:58354"/>
        <dbReference type="ChEBI" id="CHEBI:456216"/>
        <dbReference type="EC" id="2.7.1.49"/>
    </reaction>
</comment>
<comment type="catalytic activity">
    <reaction evidence="2">
        <text>4-amino-2-methyl-5-(phosphooxymethyl)pyrimidine + ATP = 4-amino-2-methyl-5-(diphosphooxymethyl)pyrimidine + ADP</text>
        <dbReference type="Rhea" id="RHEA:19893"/>
        <dbReference type="ChEBI" id="CHEBI:30616"/>
        <dbReference type="ChEBI" id="CHEBI:57841"/>
        <dbReference type="ChEBI" id="CHEBI:58354"/>
        <dbReference type="ChEBI" id="CHEBI:456216"/>
        <dbReference type="EC" id="2.7.4.7"/>
    </reaction>
</comment>
<comment type="pathway">
    <text>Cofactor biosynthesis; thiamine diphosphate biosynthesis; 4-amino-2-methyl-5-diphosphomethylpyrimidine from 5-amino-1-(5-phospho-D-ribosyl)imidazole: step 2/3.</text>
</comment>
<comment type="pathway">
    <text>Cofactor biosynthesis; thiamine diphosphate biosynthesis; 4-amino-2-methyl-5-diphosphomethylpyrimidine from 5-amino-1-(5-phospho-D-ribosyl)imidazole: step 3/3.</text>
</comment>
<comment type="subcellular location">
    <subcellularLocation>
        <location evidence="3">Cytoplasm</location>
    </subcellularLocation>
</comment>
<comment type="similarity">
    <text evidence="4">In the N-terminal section; belongs to the ThiD family.</text>
</comment>
<comment type="similarity">
    <text evidence="4">In the C-terminal section; belongs to the thiaminase-2 family.</text>
</comment>
<feature type="chain" id="PRO_0000315973" description="Putative hydroxymethylpyrimidine/phosphomethylpyrimidine kinase 2">
    <location>
        <begin position="1"/>
        <end position="551"/>
    </location>
</feature>
<feature type="binding site" evidence="1">
    <location>
        <position position="76"/>
    </location>
    <ligand>
        <name>4-amino-5-hydroxymethyl-2-methylpyrimidine</name>
        <dbReference type="ChEBI" id="CHEBI:16892"/>
    </ligand>
</feature>
<proteinExistence type="inferred from homology"/>
<name>THI22_SCHPO</name>
<accession>O94266</accession>
<organism>
    <name type="scientific">Schizosaccharomyces pombe (strain 972 / ATCC 24843)</name>
    <name type="common">Fission yeast</name>
    <dbReference type="NCBI Taxonomy" id="284812"/>
    <lineage>
        <taxon>Eukaryota</taxon>
        <taxon>Fungi</taxon>
        <taxon>Dikarya</taxon>
        <taxon>Ascomycota</taxon>
        <taxon>Taphrinomycotina</taxon>
        <taxon>Schizosaccharomycetes</taxon>
        <taxon>Schizosaccharomycetales</taxon>
        <taxon>Schizosaccharomycetaceae</taxon>
        <taxon>Schizosaccharomyces</taxon>
    </lineage>
</organism>
<gene>
    <name type="ORF">SPBP8B7.18c</name>
</gene>
<protein>
    <recommendedName>
        <fullName>Putative hydroxymethylpyrimidine/phosphomethylpyrimidine kinase 2</fullName>
        <ecNumber evidence="2">2.7.1.49</ecNumber>
        <ecNumber evidence="2">2.7.4.7</ecNumber>
    </recommendedName>
    <alternativeName>
        <fullName>Hydroxymethylpyrimidine kinase 2</fullName>
        <shortName>HMP kinase 2</shortName>
    </alternativeName>
    <alternativeName>
        <fullName>Hydroxymethylpyrimidine phosphate kinase 2</fullName>
        <shortName>HMP-P kinase 2</shortName>
        <shortName>HMP-phosphate kinase 2</shortName>
        <shortName>HMPP kinase 2</shortName>
    </alternativeName>
</protein>
<keyword id="KW-0067">ATP-binding</keyword>
<keyword id="KW-0963">Cytoplasm</keyword>
<keyword id="KW-0418">Kinase</keyword>
<keyword id="KW-0547">Nucleotide-binding</keyword>
<keyword id="KW-1185">Reference proteome</keyword>
<keyword id="KW-0784">Thiamine biosynthesis</keyword>
<keyword id="KW-0808">Transferase</keyword>
<evidence type="ECO:0000250" key="1"/>
<evidence type="ECO:0000250" key="2">
    <source>
        <dbReference type="UniProtKB" id="Q08975"/>
    </source>
</evidence>
<evidence type="ECO:0000269" key="3">
    <source>
    </source>
</evidence>
<evidence type="ECO:0000305" key="4"/>
<sequence>MPYNPLYESLSNQFDPSRIETVLDPMGYTIKRRALPVSLTIAGSDCSGGAGIQADLKTMTSLGVYGMSAITCLVAENAGGVDSVEEMSPAFVESQIDCCIRDIPCHVVKTGMLGSPEIVKAVARSAKKFNFSKLVVDPVMVATSGDSLVTKDIVSVLNEELLPLTYLVTPNIPEAIVLAKNQGLDISNINSVSDMERCAAVIHKLGPKHVLLKGGHMPVNNLGLKSSDDEDLRVVDILYDGNRFYHFSSSYLKKGEVHGTGCTLSSAIASFLAWEHSLTEAVQFGIDYVHGAITHSPPINNCSTNILNHMTRLRIVPFAPGHFIEYILSHPQVVPAWKEYINHKFTNMLAKGTLPLPAFQDYLKQDYLYLVNFARAYSLKGYKENTFPNILEAAQSVIHVIEEKELHVSMCSSYGVSLQDLKSCEESPACTAYSRYILDTGAAQDVAALDFVQAPCLIGYYVIAARLMKEPFRNPQGPYQKWVDNYFCEDYLSAVRRGCRQIEEIVLKLSPERIQELIEIFIRATKFETLFWETPYYEYVTKQNLEDKEFS</sequence>
<reference key="1">
    <citation type="journal article" date="2002" name="Nature">
        <title>The genome sequence of Schizosaccharomyces pombe.</title>
        <authorList>
            <person name="Wood V."/>
            <person name="Gwilliam R."/>
            <person name="Rajandream M.A."/>
            <person name="Lyne M.H."/>
            <person name="Lyne R."/>
            <person name="Stewart A."/>
            <person name="Sgouros J.G."/>
            <person name="Peat N."/>
            <person name="Hayles J."/>
            <person name="Baker S.G."/>
            <person name="Basham D."/>
            <person name="Bowman S."/>
            <person name="Brooks K."/>
            <person name="Brown D."/>
            <person name="Brown S."/>
            <person name="Chillingworth T."/>
            <person name="Churcher C.M."/>
            <person name="Collins M."/>
            <person name="Connor R."/>
            <person name="Cronin A."/>
            <person name="Davis P."/>
            <person name="Feltwell T."/>
            <person name="Fraser A."/>
            <person name="Gentles S."/>
            <person name="Goble A."/>
            <person name="Hamlin N."/>
            <person name="Harris D.E."/>
            <person name="Hidalgo J."/>
            <person name="Hodgson G."/>
            <person name="Holroyd S."/>
            <person name="Hornsby T."/>
            <person name="Howarth S."/>
            <person name="Huckle E.J."/>
            <person name="Hunt S."/>
            <person name="Jagels K."/>
            <person name="James K.D."/>
            <person name="Jones L."/>
            <person name="Jones M."/>
            <person name="Leather S."/>
            <person name="McDonald S."/>
            <person name="McLean J."/>
            <person name="Mooney P."/>
            <person name="Moule S."/>
            <person name="Mungall K.L."/>
            <person name="Murphy L.D."/>
            <person name="Niblett D."/>
            <person name="Odell C."/>
            <person name="Oliver K."/>
            <person name="O'Neil S."/>
            <person name="Pearson D."/>
            <person name="Quail M.A."/>
            <person name="Rabbinowitsch E."/>
            <person name="Rutherford K.M."/>
            <person name="Rutter S."/>
            <person name="Saunders D."/>
            <person name="Seeger K."/>
            <person name="Sharp S."/>
            <person name="Skelton J."/>
            <person name="Simmonds M.N."/>
            <person name="Squares R."/>
            <person name="Squares S."/>
            <person name="Stevens K."/>
            <person name="Taylor K."/>
            <person name="Taylor R.G."/>
            <person name="Tivey A."/>
            <person name="Walsh S.V."/>
            <person name="Warren T."/>
            <person name="Whitehead S."/>
            <person name="Woodward J.R."/>
            <person name="Volckaert G."/>
            <person name="Aert R."/>
            <person name="Robben J."/>
            <person name="Grymonprez B."/>
            <person name="Weltjens I."/>
            <person name="Vanstreels E."/>
            <person name="Rieger M."/>
            <person name="Schaefer M."/>
            <person name="Mueller-Auer S."/>
            <person name="Gabel C."/>
            <person name="Fuchs M."/>
            <person name="Duesterhoeft A."/>
            <person name="Fritzc C."/>
            <person name="Holzer E."/>
            <person name="Moestl D."/>
            <person name="Hilbert H."/>
            <person name="Borzym K."/>
            <person name="Langer I."/>
            <person name="Beck A."/>
            <person name="Lehrach H."/>
            <person name="Reinhardt R."/>
            <person name="Pohl T.M."/>
            <person name="Eger P."/>
            <person name="Zimmermann W."/>
            <person name="Wedler H."/>
            <person name="Wambutt R."/>
            <person name="Purnelle B."/>
            <person name="Goffeau A."/>
            <person name="Cadieu E."/>
            <person name="Dreano S."/>
            <person name="Gloux S."/>
            <person name="Lelaure V."/>
            <person name="Mottier S."/>
            <person name="Galibert F."/>
            <person name="Aves S.J."/>
            <person name="Xiang Z."/>
            <person name="Hunt C."/>
            <person name="Moore K."/>
            <person name="Hurst S.M."/>
            <person name="Lucas M."/>
            <person name="Rochet M."/>
            <person name="Gaillardin C."/>
            <person name="Tallada V.A."/>
            <person name="Garzon A."/>
            <person name="Thode G."/>
            <person name="Daga R.R."/>
            <person name="Cruzado L."/>
            <person name="Jimenez J."/>
            <person name="Sanchez M."/>
            <person name="del Rey F."/>
            <person name="Benito J."/>
            <person name="Dominguez A."/>
            <person name="Revuelta J.L."/>
            <person name="Moreno S."/>
            <person name="Armstrong J."/>
            <person name="Forsburg S.L."/>
            <person name="Cerutti L."/>
            <person name="Lowe T."/>
            <person name="McCombie W.R."/>
            <person name="Paulsen I."/>
            <person name="Potashkin J."/>
            <person name="Shpakovski G.V."/>
            <person name="Ussery D."/>
            <person name="Barrell B.G."/>
            <person name="Nurse P."/>
        </authorList>
    </citation>
    <scope>NUCLEOTIDE SEQUENCE [LARGE SCALE GENOMIC DNA]</scope>
    <source>
        <strain>972 / ATCC 24843</strain>
    </source>
</reference>
<reference key="2">
    <citation type="journal article" date="2006" name="Nat. Biotechnol.">
        <title>ORFeome cloning and global analysis of protein localization in the fission yeast Schizosaccharomyces pombe.</title>
        <authorList>
            <person name="Matsuyama A."/>
            <person name="Arai R."/>
            <person name="Yashiroda Y."/>
            <person name="Shirai A."/>
            <person name="Kamata A."/>
            <person name="Sekido S."/>
            <person name="Kobayashi Y."/>
            <person name="Hashimoto A."/>
            <person name="Hamamoto M."/>
            <person name="Hiraoka Y."/>
            <person name="Horinouchi S."/>
            <person name="Yoshida M."/>
        </authorList>
    </citation>
    <scope>SUBCELLULAR LOCATION [LARGE SCALE ANALYSIS]</scope>
</reference>
<dbReference type="EC" id="2.7.1.49" evidence="2"/>
<dbReference type="EC" id="2.7.4.7" evidence="2"/>
<dbReference type="EMBL" id="CU329671">
    <property type="protein sequence ID" value="CAA21803.1"/>
    <property type="molecule type" value="Genomic_DNA"/>
</dbReference>
<dbReference type="PIR" id="T40812">
    <property type="entry name" value="T40812"/>
</dbReference>
<dbReference type="SMR" id="O94266"/>
<dbReference type="BioGRID" id="277884">
    <property type="interactions" value="18"/>
</dbReference>
<dbReference type="FunCoup" id="O94266">
    <property type="interactions" value="354"/>
</dbReference>
<dbReference type="STRING" id="284812.O94266"/>
<dbReference type="iPTMnet" id="O94266"/>
<dbReference type="PaxDb" id="4896-SPBP8B7.18c.1"/>
<dbReference type="EnsemblFungi" id="SPBP8B7.18c.1">
    <property type="protein sequence ID" value="SPBP8B7.18c.1:pep"/>
    <property type="gene ID" value="SPBP8B7.18c"/>
</dbReference>
<dbReference type="KEGG" id="spo:2541373"/>
<dbReference type="PomBase" id="SPBP8B7.18c"/>
<dbReference type="VEuPathDB" id="FungiDB:SPBP8B7.18c"/>
<dbReference type="eggNOG" id="KOG2598">
    <property type="taxonomic scope" value="Eukaryota"/>
</dbReference>
<dbReference type="HOGENOM" id="CLU_020520_2_1_1"/>
<dbReference type="InParanoid" id="O94266"/>
<dbReference type="OMA" id="FWEMFPY"/>
<dbReference type="PhylomeDB" id="O94266"/>
<dbReference type="UniPathway" id="UPA00060">
    <property type="reaction ID" value="UER00137"/>
</dbReference>
<dbReference type="UniPathway" id="UPA00060">
    <property type="reaction ID" value="UER00138"/>
</dbReference>
<dbReference type="PRO" id="PR:O94266"/>
<dbReference type="Proteomes" id="UP000002485">
    <property type="component" value="Chromosome II"/>
</dbReference>
<dbReference type="GO" id="GO:0005829">
    <property type="term" value="C:cytosol"/>
    <property type="evidence" value="ECO:0007005"/>
    <property type="project" value="PomBase"/>
</dbReference>
<dbReference type="GO" id="GO:0005524">
    <property type="term" value="F:ATP binding"/>
    <property type="evidence" value="ECO:0007669"/>
    <property type="project" value="UniProtKB-KW"/>
</dbReference>
<dbReference type="GO" id="GO:0008902">
    <property type="term" value="F:hydroxymethylpyrimidine kinase activity"/>
    <property type="evidence" value="ECO:0000318"/>
    <property type="project" value="GO_Central"/>
</dbReference>
<dbReference type="GO" id="GO:0008972">
    <property type="term" value="F:phosphomethylpyrimidine kinase activity"/>
    <property type="evidence" value="ECO:0000318"/>
    <property type="project" value="GO_Central"/>
</dbReference>
<dbReference type="GO" id="GO:0009228">
    <property type="term" value="P:thiamine biosynthetic process"/>
    <property type="evidence" value="ECO:0000318"/>
    <property type="project" value="GO_Central"/>
</dbReference>
<dbReference type="GO" id="GO:0009229">
    <property type="term" value="P:thiamine diphosphate biosynthetic process"/>
    <property type="evidence" value="ECO:0007669"/>
    <property type="project" value="UniProtKB-UniPathway"/>
</dbReference>
<dbReference type="CDD" id="cd01169">
    <property type="entry name" value="HMPP_kinase"/>
    <property type="match status" value="1"/>
</dbReference>
<dbReference type="CDD" id="cd19367">
    <property type="entry name" value="TenA_C_ScTHI20-like"/>
    <property type="match status" value="1"/>
</dbReference>
<dbReference type="FunFam" id="3.40.1190.20:FF:000097">
    <property type="entry name" value="Hydroxymethylpyrimidine phosphate kinase"/>
    <property type="match status" value="1"/>
</dbReference>
<dbReference type="FunFam" id="1.20.910.10:FF:000003">
    <property type="entry name" value="Hydroxymethylpyrimidine/phosphomethylpyrimidine kinase THI20"/>
    <property type="match status" value="1"/>
</dbReference>
<dbReference type="Gene3D" id="3.40.1190.20">
    <property type="match status" value="1"/>
</dbReference>
<dbReference type="Gene3D" id="1.20.910.10">
    <property type="entry name" value="Heme oxygenase-like"/>
    <property type="match status" value="1"/>
</dbReference>
<dbReference type="InterPro" id="IPR016084">
    <property type="entry name" value="Haem_Oase-like_multi-hlx"/>
</dbReference>
<dbReference type="InterPro" id="IPR004399">
    <property type="entry name" value="HMP/HMP-P_kinase_dom"/>
</dbReference>
<dbReference type="InterPro" id="IPR013749">
    <property type="entry name" value="PM/HMP-P_kinase-1"/>
</dbReference>
<dbReference type="InterPro" id="IPR029056">
    <property type="entry name" value="Ribokinase-like"/>
</dbReference>
<dbReference type="InterPro" id="IPR004305">
    <property type="entry name" value="Thiaminase-2/PQQC"/>
</dbReference>
<dbReference type="NCBIfam" id="TIGR00097">
    <property type="entry name" value="HMP-P_kinase"/>
    <property type="match status" value="1"/>
</dbReference>
<dbReference type="PANTHER" id="PTHR20858:SF17">
    <property type="entry name" value="HYDROXYMETHYLPYRIMIDINE_PHOSPHOMETHYLPYRIMIDINE KINASE THI20-RELATED"/>
    <property type="match status" value="1"/>
</dbReference>
<dbReference type="PANTHER" id="PTHR20858">
    <property type="entry name" value="PHOSPHOMETHYLPYRIMIDINE KINASE"/>
    <property type="match status" value="1"/>
</dbReference>
<dbReference type="Pfam" id="PF08543">
    <property type="entry name" value="Phos_pyr_kin"/>
    <property type="match status" value="1"/>
</dbReference>
<dbReference type="Pfam" id="PF03070">
    <property type="entry name" value="TENA_THI-4"/>
    <property type="match status" value="1"/>
</dbReference>
<dbReference type="SUPFAM" id="SSF48613">
    <property type="entry name" value="Heme oxygenase-like"/>
    <property type="match status" value="1"/>
</dbReference>
<dbReference type="SUPFAM" id="SSF53613">
    <property type="entry name" value="Ribokinase-like"/>
    <property type="match status" value="1"/>
</dbReference>